<sequence>MMTKTQINKLIKMMNDLDYPFEAPLKESFIESIIQIEFNSNSTNCLEKLCNEVSILFKNQPDYLTFLRAMDGFEVNGLRLFSLSIPEPSVKNLFAVNEFYRNNDDFINPDLQERLVIGDYSISIFTYDIKGDAANLLI</sequence>
<proteinExistence type="uncertain"/>
<keyword id="KW-1185">Reference proteome</keyword>
<name>YRHA_ECOLI</name>
<dbReference type="EMBL" id="U18997">
    <property type="protein sequence ID" value="AAA58241.1"/>
    <property type="molecule type" value="Genomic_DNA"/>
</dbReference>
<dbReference type="EMBL" id="U00096">
    <property type="status" value="NOT_ANNOTATED_CDS"/>
    <property type="molecule type" value="Genomic_DNA"/>
</dbReference>
<dbReference type="EMBL" id="AP009048">
    <property type="protein sequence ID" value="BAE77850.1"/>
    <property type="status" value="ALT_INIT"/>
    <property type="molecule type" value="Genomic_DNA"/>
</dbReference>
<dbReference type="PIR" id="F65140">
    <property type="entry name" value="F65140"/>
</dbReference>
<dbReference type="RefSeq" id="WP_000988497.1">
    <property type="nucleotide sequence ID" value="NZ_LN832404.1"/>
</dbReference>
<dbReference type="SMR" id="P46856"/>
<dbReference type="BioGRID" id="4259621">
    <property type="interactions" value="208"/>
</dbReference>
<dbReference type="FunCoup" id="P46856">
    <property type="interactions" value="1"/>
</dbReference>
<dbReference type="KEGG" id="ecj:JW5864"/>
<dbReference type="KEGG" id="ecoc:C3026_18655"/>
<dbReference type="PATRIC" id="fig|83333.103.peg.4342"/>
<dbReference type="EchoBASE" id="EB2781"/>
<dbReference type="eggNOG" id="ENOG502ZQ83">
    <property type="taxonomic scope" value="Bacteria"/>
</dbReference>
<dbReference type="HOGENOM" id="CLU_110167_1_0_6"/>
<dbReference type="InParanoid" id="P46856"/>
<dbReference type="OrthoDB" id="6606668at2"/>
<dbReference type="Proteomes" id="UP000000625">
    <property type="component" value="Chromosome"/>
</dbReference>
<dbReference type="NCBIfam" id="NF038335">
    <property type="entry name" value="YPO0640_fam"/>
    <property type="match status" value="1"/>
</dbReference>
<feature type="chain" id="PRO_0000169559" description="Putative uncharacterized protein YrhA">
    <location>
        <begin position="1"/>
        <end position="138"/>
    </location>
</feature>
<accession>P46856</accession>
<accession>Q2M7A6</accession>
<reference key="1">
    <citation type="journal article" date="1997" name="Science">
        <title>The complete genome sequence of Escherichia coli K-12.</title>
        <authorList>
            <person name="Blattner F.R."/>
            <person name="Plunkett G. III"/>
            <person name="Bloch C.A."/>
            <person name="Perna N.T."/>
            <person name="Burland V."/>
            <person name="Riley M."/>
            <person name="Collado-Vides J."/>
            <person name="Glasner J.D."/>
            <person name="Rode C.K."/>
            <person name="Mayhew G.F."/>
            <person name="Gregor J."/>
            <person name="Davis N.W."/>
            <person name="Kirkpatrick H.A."/>
            <person name="Goeden M.A."/>
            <person name="Rose D.J."/>
            <person name="Mau B."/>
            <person name="Shao Y."/>
        </authorList>
    </citation>
    <scope>NUCLEOTIDE SEQUENCE [LARGE SCALE GENOMIC DNA]</scope>
    <source>
        <strain>K12 / MG1655 / ATCC 47076</strain>
    </source>
</reference>
<reference key="2">
    <citation type="journal article" date="2006" name="Mol. Syst. Biol.">
        <title>Highly accurate genome sequences of Escherichia coli K-12 strains MG1655 and W3110.</title>
        <authorList>
            <person name="Hayashi K."/>
            <person name="Morooka N."/>
            <person name="Yamamoto Y."/>
            <person name="Fujita K."/>
            <person name="Isono K."/>
            <person name="Choi S."/>
            <person name="Ohtsubo E."/>
            <person name="Baba T."/>
            <person name="Wanner B.L."/>
            <person name="Mori H."/>
            <person name="Horiuchi T."/>
        </authorList>
    </citation>
    <scope>NUCLEOTIDE SEQUENCE [LARGE SCALE GENOMIC DNA]</scope>
    <source>
        <strain>K12 / W3110 / ATCC 27325 / DSM 5911</strain>
    </source>
</reference>
<evidence type="ECO:0000305" key="1"/>
<organism>
    <name type="scientific">Escherichia coli (strain K12)</name>
    <dbReference type="NCBI Taxonomy" id="83333"/>
    <lineage>
        <taxon>Bacteria</taxon>
        <taxon>Pseudomonadati</taxon>
        <taxon>Pseudomonadota</taxon>
        <taxon>Gammaproteobacteria</taxon>
        <taxon>Enterobacterales</taxon>
        <taxon>Enterobacteriaceae</taxon>
        <taxon>Escherichia</taxon>
    </lineage>
</organism>
<comment type="caution">
    <text evidence="1">Could be the product of a pseudogene.</text>
</comment>
<comment type="sequence caution" evidence="1">
    <conflict type="erroneous initiation">
        <sequence resource="EMBL-CDS" id="BAE77850"/>
    </conflict>
</comment>
<gene>
    <name type="primary">yrhA</name>
    <name type="ordered locus">b3443</name>
    <name type="ordered locus">JW5864</name>
</gene>
<protein>
    <recommendedName>
        <fullName>Putative uncharacterized protein YrhA</fullName>
    </recommendedName>
</protein>